<name>FEOC_SALA4</name>
<gene>
    <name evidence="1" type="primary">feoC</name>
    <name type="ordered locus">SeAg_B3708</name>
</gene>
<keyword id="KW-0238">DNA-binding</keyword>
<keyword id="KW-0408">Iron</keyword>
<keyword id="KW-0411">Iron-sulfur</keyword>
<keyword id="KW-0479">Metal-binding</keyword>
<keyword id="KW-0678">Repressor</keyword>
<keyword id="KW-0804">Transcription</keyword>
<keyword id="KW-0805">Transcription regulation</keyword>
<comment type="function">
    <text evidence="1">May function as a transcriptional regulator that controls feoABC expression.</text>
</comment>
<comment type="similarity">
    <text evidence="1">Belongs to the FeoC family.</text>
</comment>
<proteinExistence type="inferred from homology"/>
<dbReference type="EMBL" id="CP001138">
    <property type="protein sequence ID" value="ACH49501.1"/>
    <property type="molecule type" value="Genomic_DNA"/>
</dbReference>
<dbReference type="RefSeq" id="WP_000157587.1">
    <property type="nucleotide sequence ID" value="NC_011149.1"/>
</dbReference>
<dbReference type="SMR" id="B5F8M3"/>
<dbReference type="KEGG" id="sea:SeAg_B3708"/>
<dbReference type="HOGENOM" id="CLU_189182_0_0_6"/>
<dbReference type="Proteomes" id="UP000008819">
    <property type="component" value="Chromosome"/>
</dbReference>
<dbReference type="GO" id="GO:0003677">
    <property type="term" value="F:DNA binding"/>
    <property type="evidence" value="ECO:0007669"/>
    <property type="project" value="UniProtKB-KW"/>
</dbReference>
<dbReference type="GO" id="GO:0005506">
    <property type="term" value="F:iron ion binding"/>
    <property type="evidence" value="ECO:0007669"/>
    <property type="project" value="UniProtKB-UniRule"/>
</dbReference>
<dbReference type="GO" id="GO:0051536">
    <property type="term" value="F:iron-sulfur cluster binding"/>
    <property type="evidence" value="ECO:0007669"/>
    <property type="project" value="UniProtKB-KW"/>
</dbReference>
<dbReference type="Gene3D" id="1.10.10.10">
    <property type="entry name" value="Winged helix-like DNA-binding domain superfamily/Winged helix DNA-binding domain"/>
    <property type="match status" value="1"/>
</dbReference>
<dbReference type="HAMAP" id="MF_01586">
    <property type="entry name" value="FeoC"/>
    <property type="match status" value="1"/>
</dbReference>
<dbReference type="InterPro" id="IPR023732">
    <property type="entry name" value="FeoC"/>
</dbReference>
<dbReference type="InterPro" id="IPR015102">
    <property type="entry name" value="Tscrpt_reg_HTH_FeoC"/>
</dbReference>
<dbReference type="InterPro" id="IPR036388">
    <property type="entry name" value="WH-like_DNA-bd_sf"/>
</dbReference>
<dbReference type="InterPro" id="IPR036390">
    <property type="entry name" value="WH_DNA-bd_sf"/>
</dbReference>
<dbReference type="NCBIfam" id="NF011960">
    <property type="entry name" value="PRK15431.1"/>
    <property type="match status" value="1"/>
</dbReference>
<dbReference type="Pfam" id="PF09012">
    <property type="entry name" value="FeoC"/>
    <property type="match status" value="1"/>
</dbReference>
<dbReference type="SUPFAM" id="SSF46785">
    <property type="entry name" value="Winged helix' DNA-binding domain"/>
    <property type="match status" value="1"/>
</dbReference>
<organism>
    <name type="scientific">Salmonella agona (strain SL483)</name>
    <dbReference type="NCBI Taxonomy" id="454166"/>
    <lineage>
        <taxon>Bacteria</taxon>
        <taxon>Pseudomonadati</taxon>
        <taxon>Pseudomonadota</taxon>
        <taxon>Gammaproteobacteria</taxon>
        <taxon>Enterobacterales</taxon>
        <taxon>Enterobacteriaceae</taxon>
        <taxon>Salmonella</taxon>
    </lineage>
</organism>
<protein>
    <recommendedName>
        <fullName evidence="1">Probable [Fe-S]-dependent transcriptional repressor</fullName>
    </recommendedName>
</protein>
<reference key="1">
    <citation type="journal article" date="2011" name="J. Bacteriol.">
        <title>Comparative genomics of 28 Salmonella enterica isolates: evidence for CRISPR-mediated adaptive sublineage evolution.</title>
        <authorList>
            <person name="Fricke W.F."/>
            <person name="Mammel M.K."/>
            <person name="McDermott P.F."/>
            <person name="Tartera C."/>
            <person name="White D.G."/>
            <person name="Leclerc J.E."/>
            <person name="Ravel J."/>
            <person name="Cebula T.A."/>
        </authorList>
    </citation>
    <scope>NUCLEOTIDE SEQUENCE [LARGE SCALE GENOMIC DNA]</scope>
    <source>
        <strain>SL483</strain>
    </source>
</reference>
<evidence type="ECO:0000255" key="1">
    <source>
        <dbReference type="HAMAP-Rule" id="MF_01586"/>
    </source>
</evidence>
<sequence length="78" mass="8648">MASLIQVRDLLALRGRMEATQISHTLHAPQPMIDAMLNQLEIMGKAVRIPEEADGCLSGSCKSCPEGKACLREWWALR</sequence>
<feature type="chain" id="PRO_1000201330" description="Probable [Fe-S]-dependent transcriptional repressor">
    <location>
        <begin position="1"/>
        <end position="78"/>
    </location>
</feature>
<feature type="binding site" evidence="1">
    <location>
        <position position="56"/>
    </location>
    <ligand>
        <name>iron-sulfur cluster</name>
        <dbReference type="ChEBI" id="CHEBI:30408"/>
    </ligand>
</feature>
<feature type="binding site" evidence="1">
    <location>
        <position position="61"/>
    </location>
    <ligand>
        <name>iron-sulfur cluster</name>
        <dbReference type="ChEBI" id="CHEBI:30408"/>
    </ligand>
</feature>
<feature type="binding site" evidence="1">
    <location>
        <position position="64"/>
    </location>
    <ligand>
        <name>iron-sulfur cluster</name>
        <dbReference type="ChEBI" id="CHEBI:30408"/>
    </ligand>
</feature>
<feature type="binding site" evidence="1">
    <location>
        <position position="70"/>
    </location>
    <ligand>
        <name>iron-sulfur cluster</name>
        <dbReference type="ChEBI" id="CHEBI:30408"/>
    </ligand>
</feature>
<accession>B5F8M3</accession>